<dbReference type="EMBL" id="AC002510">
    <property type="protein sequence ID" value="AAB84345.2"/>
    <property type="molecule type" value="Genomic_DNA"/>
</dbReference>
<dbReference type="EMBL" id="CP002685">
    <property type="protein sequence ID" value="AEC10008.1"/>
    <property type="molecule type" value="Genomic_DNA"/>
</dbReference>
<dbReference type="EMBL" id="AY034907">
    <property type="protein sequence ID" value="AAK59414.1"/>
    <property type="molecule type" value="mRNA"/>
</dbReference>
<dbReference type="EMBL" id="AY113905">
    <property type="protein sequence ID" value="AAM44953.1"/>
    <property type="molecule type" value="mRNA"/>
</dbReference>
<dbReference type="PIR" id="T00818">
    <property type="entry name" value="T00818"/>
</dbReference>
<dbReference type="RefSeq" id="NP_565951.1">
    <property type="nucleotide sequence ID" value="NM_129725.5"/>
</dbReference>
<dbReference type="SMR" id="O22224"/>
<dbReference type="BioGRID" id="4097">
    <property type="interactions" value="56"/>
</dbReference>
<dbReference type="FunCoup" id="O22224">
    <property type="interactions" value="5165"/>
</dbReference>
<dbReference type="IntAct" id="O22224">
    <property type="interactions" value="1"/>
</dbReference>
<dbReference type="STRING" id="3702.O22224"/>
<dbReference type="iPTMnet" id="O22224"/>
<dbReference type="PaxDb" id="3702-AT2G41620.1"/>
<dbReference type="ProteomicsDB" id="250514"/>
<dbReference type="EnsemblPlants" id="AT2G41620.1">
    <property type="protein sequence ID" value="AT2G41620.1"/>
    <property type="gene ID" value="AT2G41620"/>
</dbReference>
<dbReference type="GeneID" id="818760"/>
<dbReference type="Gramene" id="AT2G41620.1">
    <property type="protein sequence ID" value="AT2G41620.1"/>
    <property type="gene ID" value="AT2G41620"/>
</dbReference>
<dbReference type="KEGG" id="ath:AT2G41620"/>
<dbReference type="Araport" id="AT2G41620"/>
<dbReference type="TAIR" id="AT2G41620"/>
<dbReference type="eggNOG" id="KOG2168">
    <property type="taxonomic scope" value="Eukaryota"/>
</dbReference>
<dbReference type="HOGENOM" id="CLU_017473_0_0_1"/>
<dbReference type="InParanoid" id="O22224"/>
<dbReference type="OMA" id="LLMCGQF"/>
<dbReference type="PhylomeDB" id="O22224"/>
<dbReference type="CD-CODE" id="4299E36E">
    <property type="entry name" value="Nucleolus"/>
</dbReference>
<dbReference type="PRO" id="PR:O22224"/>
<dbReference type="Proteomes" id="UP000006548">
    <property type="component" value="Chromosome 2"/>
</dbReference>
<dbReference type="ExpressionAtlas" id="O22224">
    <property type="expression patterns" value="baseline and differential"/>
</dbReference>
<dbReference type="GO" id="GO:0005635">
    <property type="term" value="C:nuclear envelope"/>
    <property type="evidence" value="ECO:0000314"/>
    <property type="project" value="TAIR"/>
</dbReference>
<dbReference type="GO" id="GO:0005643">
    <property type="term" value="C:nuclear pore"/>
    <property type="evidence" value="ECO:0007669"/>
    <property type="project" value="UniProtKB-SubCell"/>
</dbReference>
<dbReference type="GO" id="GO:0005730">
    <property type="term" value="C:nucleolus"/>
    <property type="evidence" value="ECO:0007005"/>
    <property type="project" value="TAIR"/>
</dbReference>
<dbReference type="GO" id="GO:0009506">
    <property type="term" value="C:plasmodesma"/>
    <property type="evidence" value="ECO:0007005"/>
    <property type="project" value="TAIR"/>
</dbReference>
<dbReference type="GO" id="GO:0017056">
    <property type="term" value="F:structural constituent of nuclear pore"/>
    <property type="evidence" value="ECO:0007669"/>
    <property type="project" value="InterPro"/>
</dbReference>
<dbReference type="GO" id="GO:0051028">
    <property type="term" value="P:mRNA transport"/>
    <property type="evidence" value="ECO:0007669"/>
    <property type="project" value="UniProtKB-KW"/>
</dbReference>
<dbReference type="GO" id="GO:0015031">
    <property type="term" value="P:protein transport"/>
    <property type="evidence" value="ECO:0007669"/>
    <property type="project" value="UniProtKB-KW"/>
</dbReference>
<dbReference type="InterPro" id="IPR007231">
    <property type="entry name" value="Nucleoporin_int_Nup93/Nic96"/>
</dbReference>
<dbReference type="PANTHER" id="PTHR11225">
    <property type="entry name" value="NUCLEAR PORE COMPLEX PROTEIN NUP93 NUCLEOPORIN NUP93 DEAD EYE PROTEIN"/>
    <property type="match status" value="1"/>
</dbReference>
<dbReference type="PANTHER" id="PTHR11225:SF5">
    <property type="entry name" value="NUCLEAR PORE COMPLEX PROTEIN NUP93A"/>
    <property type="match status" value="1"/>
</dbReference>
<dbReference type="Pfam" id="PF04097">
    <property type="entry name" value="Nic96"/>
    <property type="match status" value="1"/>
</dbReference>
<gene>
    <name evidence="2" type="primary">NUP93A</name>
    <name evidence="5" type="ordered locus">At2g41620</name>
    <name evidence="6" type="ORF">T32G6.14</name>
</gene>
<keyword id="KW-0509">mRNA transport</keyword>
<keyword id="KW-0906">Nuclear pore complex</keyword>
<keyword id="KW-0539">Nucleus</keyword>
<keyword id="KW-0653">Protein transport</keyword>
<keyword id="KW-1185">Reference proteome</keyword>
<keyword id="KW-0811">Translocation</keyword>
<keyword id="KW-0813">Transport</keyword>
<organism>
    <name type="scientific">Arabidopsis thaliana</name>
    <name type="common">Mouse-ear cress</name>
    <dbReference type="NCBI Taxonomy" id="3702"/>
    <lineage>
        <taxon>Eukaryota</taxon>
        <taxon>Viridiplantae</taxon>
        <taxon>Streptophyta</taxon>
        <taxon>Embryophyta</taxon>
        <taxon>Tracheophyta</taxon>
        <taxon>Spermatophyta</taxon>
        <taxon>Magnoliopsida</taxon>
        <taxon>eudicotyledons</taxon>
        <taxon>Gunneridae</taxon>
        <taxon>Pentapetalae</taxon>
        <taxon>rosids</taxon>
        <taxon>malvids</taxon>
        <taxon>Brassicales</taxon>
        <taxon>Brassicaceae</taxon>
        <taxon>Camelineae</taxon>
        <taxon>Arabidopsis</taxon>
    </lineage>
</organism>
<comment type="subunit">
    <text evidence="4">Part of the nuclear pore complex (NPC). The NPC has an eight-fold symmetrical structure comprising a central transport channel and two rings, the cytoplasmic and nuclear rings, to which eight filaments are attached. The cytoplasmic filaments have loose ends, while the nuclear filaments are joined in a distal ring, forming a nuclear basket. NPCs are highly dynamic in configuration and composition, and can be devided in 3 subcomplexes, the NUP62 subcomplex, the NUP107-160 subcomplex and the NUP93 subcomplex, containing approximately 30 different nucleoporin proteins.</text>
</comment>
<comment type="subcellular location">
    <subcellularLocation>
        <location evidence="1">Nucleus envelope</location>
    </subcellularLocation>
    <subcellularLocation>
        <location evidence="4">Nucleus</location>
        <location evidence="4">Nuclear pore complex</location>
    </subcellularLocation>
</comment>
<comment type="similarity">
    <text evidence="3">Belongs to the nucleoporin interacting component (NIC) family.</text>
</comment>
<proteinExistence type="evidence at protein level"/>
<sequence>MANDQEMSGWTDLLHSSSKLLEQAAPSSQFPPLQRNLDQLEALSKKLKAKTLRNEAPSQSIAATRLLAREGINAEQLARDLKSFELKTTFEDVFPAEATSVEEYLQQVHEMAMVSAIQEAQKDNVRSFNDYMMKVLEEDWRKEKRDFLQSLSRISMLPKTNMIDTSREAHAGQLVPVGSSPRVSSTPGKELVALANIPIHEKKAYVYGEVVKKLNTSRERGMPFRPAMCFKDAYDTLGAEVTRGKSVNMQKIWQLVQAITGEDSAVRQGVSKRMALAIGARHHLQHGHEKFIMDTIQTHPTQAALGGSVGNLQRIRAFLRIRLRDYGVLDFDSTDARRQPPVDTTWQQIYFCLRTGYYEEAREIARSTRSSQQFAPLLTEWITTDGMVAAESAAIASEECEKMLRMGDRLGRTAYDKKKLLLYTIISGSRRQIERILRDLSTLFNTIEDFLWFKLSCIRDVTGGSSSVVLNDGLAPYSLDDLQAYLNKFEPSYYTKNGKDPLVYPYVLLLSVQLLPAIMHLSKEAGDGGYNIDAVHIAISLVDHSVLSEGSGTGHKLSVMDSNAEASSMIRQYGSMFLHHGDLQMTVEYYAQAAATVGGGQLAWSGRSNVDQQRQRNLMLKQLLTEILLRERGIYFLLGARGSGEEGQLGRFFPDSRLRQQFLVEAAHQCQEAGLYDKSIELQKRVGAFSAALETINKCLSEAICSLARGRLDGESRTSGLILAGNDILETYKYYPEVSLQERERVMEQETILRELEAILSIHKLGRLGNHLDALREIAKLPFLHLDPRMPDATADVFQSASPYFQTCVPDLLKVALTCLDNVPDTDGSIRAMRSKIAGFLASNTHRNWPRDLYEKVARSF</sequence>
<reference key="1">
    <citation type="journal article" date="1999" name="Nature">
        <title>Sequence and analysis of chromosome 2 of the plant Arabidopsis thaliana.</title>
        <authorList>
            <person name="Lin X."/>
            <person name="Kaul S."/>
            <person name="Rounsley S.D."/>
            <person name="Shea T.P."/>
            <person name="Benito M.-I."/>
            <person name="Town C.D."/>
            <person name="Fujii C.Y."/>
            <person name="Mason T.M."/>
            <person name="Bowman C.L."/>
            <person name="Barnstead M.E."/>
            <person name="Feldblyum T.V."/>
            <person name="Buell C.R."/>
            <person name="Ketchum K.A."/>
            <person name="Lee J.J."/>
            <person name="Ronning C.M."/>
            <person name="Koo H.L."/>
            <person name="Moffat K.S."/>
            <person name="Cronin L.A."/>
            <person name="Shen M."/>
            <person name="Pai G."/>
            <person name="Van Aken S."/>
            <person name="Umayam L."/>
            <person name="Tallon L.J."/>
            <person name="Gill J.E."/>
            <person name="Adams M.D."/>
            <person name="Carrera A.J."/>
            <person name="Creasy T.H."/>
            <person name="Goodman H.M."/>
            <person name="Somerville C.R."/>
            <person name="Copenhaver G.P."/>
            <person name="Preuss D."/>
            <person name="Nierman W.C."/>
            <person name="White O."/>
            <person name="Eisen J.A."/>
            <person name="Salzberg S.L."/>
            <person name="Fraser C.M."/>
            <person name="Venter J.C."/>
        </authorList>
    </citation>
    <scope>NUCLEOTIDE SEQUENCE [LARGE SCALE GENOMIC DNA]</scope>
    <source>
        <strain>cv. Columbia</strain>
    </source>
</reference>
<reference key="2">
    <citation type="journal article" date="2017" name="Plant J.">
        <title>Araport11: a complete reannotation of the Arabidopsis thaliana reference genome.</title>
        <authorList>
            <person name="Cheng C.Y."/>
            <person name="Krishnakumar V."/>
            <person name="Chan A.P."/>
            <person name="Thibaud-Nissen F."/>
            <person name="Schobel S."/>
            <person name="Town C.D."/>
        </authorList>
    </citation>
    <scope>GENOME REANNOTATION</scope>
    <source>
        <strain>cv. Columbia</strain>
    </source>
</reference>
<reference key="3">
    <citation type="journal article" date="2003" name="Science">
        <title>Empirical analysis of transcriptional activity in the Arabidopsis genome.</title>
        <authorList>
            <person name="Yamada K."/>
            <person name="Lim J."/>
            <person name="Dale J.M."/>
            <person name="Chen H."/>
            <person name="Shinn P."/>
            <person name="Palm C.J."/>
            <person name="Southwick A.M."/>
            <person name="Wu H.C."/>
            <person name="Kim C.J."/>
            <person name="Nguyen M."/>
            <person name="Pham P.K."/>
            <person name="Cheuk R.F."/>
            <person name="Karlin-Newmann G."/>
            <person name="Liu S.X."/>
            <person name="Lam B."/>
            <person name="Sakano H."/>
            <person name="Wu T."/>
            <person name="Yu G."/>
            <person name="Miranda M."/>
            <person name="Quach H.L."/>
            <person name="Tripp M."/>
            <person name="Chang C.H."/>
            <person name="Lee J.M."/>
            <person name="Toriumi M.J."/>
            <person name="Chan M.M."/>
            <person name="Tang C.C."/>
            <person name="Onodera C.S."/>
            <person name="Deng J.M."/>
            <person name="Akiyama K."/>
            <person name="Ansari Y."/>
            <person name="Arakawa T."/>
            <person name="Banh J."/>
            <person name="Banno F."/>
            <person name="Bowser L."/>
            <person name="Brooks S.Y."/>
            <person name="Carninci P."/>
            <person name="Chao Q."/>
            <person name="Choy N."/>
            <person name="Enju A."/>
            <person name="Goldsmith A.D."/>
            <person name="Gurjal M."/>
            <person name="Hansen N.F."/>
            <person name="Hayashizaki Y."/>
            <person name="Johnson-Hopson C."/>
            <person name="Hsuan V.W."/>
            <person name="Iida K."/>
            <person name="Karnes M."/>
            <person name="Khan S."/>
            <person name="Koesema E."/>
            <person name="Ishida J."/>
            <person name="Jiang P.X."/>
            <person name="Jones T."/>
            <person name="Kawai J."/>
            <person name="Kamiya A."/>
            <person name="Meyers C."/>
            <person name="Nakajima M."/>
            <person name="Narusaka M."/>
            <person name="Seki M."/>
            <person name="Sakurai T."/>
            <person name="Satou M."/>
            <person name="Tamse R."/>
            <person name="Vaysberg M."/>
            <person name="Wallender E.K."/>
            <person name="Wong C."/>
            <person name="Yamamura Y."/>
            <person name="Yuan S."/>
            <person name="Shinozaki K."/>
            <person name="Davis R.W."/>
            <person name="Theologis A."/>
            <person name="Ecker J.R."/>
        </authorList>
    </citation>
    <scope>NUCLEOTIDE SEQUENCE [LARGE SCALE MRNA]</scope>
    <source>
        <strain>cv. Columbia</strain>
    </source>
</reference>
<reference key="4">
    <citation type="unpublished observations" date="2000-09">
        <authorList>
            <person name="Sarazin B."/>
            <person name="Tonella L."/>
            <person name="Marques K."/>
            <person name="Paesano S."/>
            <person name="Chane-Favre L."/>
            <person name="Heller M."/>
            <person name="Sanchez J.-C."/>
            <person name="Hochstrasser D.F."/>
            <person name="Thiellement H."/>
        </authorList>
    </citation>
    <scope>IDENTIFICATION ON 2D-GELS</scope>
    <source>
        <strain>cv. Columbia</strain>
    </source>
</reference>
<reference key="5">
    <citation type="journal article" date="2010" name="Plant Cell">
        <title>Identification and characterization of nuclear pore complex components in Arabidopsis thaliana.</title>
        <authorList>
            <person name="Tamura K."/>
            <person name="Fukao Y."/>
            <person name="Iwamoto M."/>
            <person name="Haraguchi T."/>
            <person name="Hara-Nishimura I."/>
        </authorList>
    </citation>
    <scope>IDENTIFICATION IN THE NUCLEAR PORE COMPLEX BY MASS SPECTROMETRY</scope>
    <scope>SUBCELLULAR LOCATION</scope>
    <scope>NOMENCLATURE</scope>
</reference>
<evidence type="ECO:0000269" key="1">
    <source>
    </source>
</evidence>
<evidence type="ECO:0000303" key="2">
    <source>
    </source>
</evidence>
<evidence type="ECO:0000305" key="3"/>
<evidence type="ECO:0000305" key="4">
    <source>
    </source>
</evidence>
<evidence type="ECO:0000312" key="5">
    <source>
        <dbReference type="Araport" id="AT2G41620"/>
    </source>
</evidence>
<evidence type="ECO:0000312" key="6">
    <source>
        <dbReference type="EMBL" id="AAB84345.2"/>
    </source>
</evidence>
<name>NP93A_ARATH</name>
<accession>O22224</accession>
<accession>Q94CF2</accession>
<protein>
    <recommendedName>
        <fullName evidence="2">Nuclear pore complex protein NUP93A</fullName>
    </recommendedName>
    <alternativeName>
        <fullName>Nucleoporin 93A</fullName>
    </alternativeName>
</protein>
<feature type="chain" id="PRO_0000220600" description="Nuclear pore complex protein NUP93A">
    <location>
        <begin position="1"/>
        <end position="861"/>
    </location>
</feature>